<feature type="signal peptide">
    <location>
        <begin position="1"/>
        <end position="24"/>
    </location>
</feature>
<feature type="chain" id="PRO_0000035890" description="5,6-dihydroxyindole-2-carboxylic acid oxidase">
    <location>
        <begin position="25"/>
        <end position="537"/>
    </location>
</feature>
<feature type="topological domain" description="Lumenal, melanosome" evidence="2">
    <location>
        <begin position="25"/>
        <end position="477"/>
    </location>
</feature>
<feature type="transmembrane region" description="Helical" evidence="2">
    <location>
        <begin position="478"/>
        <end position="501"/>
    </location>
</feature>
<feature type="topological domain" description="Cytoplasmic" evidence="2">
    <location>
        <begin position="502"/>
        <end position="537"/>
    </location>
</feature>
<feature type="binding site" evidence="1">
    <location>
        <position position="192"/>
    </location>
    <ligand>
        <name>Zn(2+)</name>
        <dbReference type="ChEBI" id="CHEBI:29105"/>
        <label>A</label>
    </ligand>
</feature>
<feature type="binding site" evidence="1">
    <location>
        <position position="215"/>
    </location>
    <ligand>
        <name>Zn(2+)</name>
        <dbReference type="ChEBI" id="CHEBI:29105"/>
        <label>A</label>
    </ligand>
</feature>
<feature type="binding site" evidence="1">
    <location>
        <position position="224"/>
    </location>
    <ligand>
        <name>Zn(2+)</name>
        <dbReference type="ChEBI" id="CHEBI:29105"/>
        <label>A</label>
    </ligand>
</feature>
<feature type="binding site" evidence="1">
    <location>
        <position position="377"/>
    </location>
    <ligand>
        <name>Zn(2+)</name>
        <dbReference type="ChEBI" id="CHEBI:29105"/>
        <label>B</label>
    </ligand>
</feature>
<feature type="binding site" evidence="1">
    <location>
        <position position="381"/>
    </location>
    <ligand>
        <name>Zn(2+)</name>
        <dbReference type="ChEBI" id="CHEBI:29105"/>
        <label>B</label>
    </ligand>
</feature>
<feature type="binding site" evidence="1">
    <location>
        <position position="404"/>
    </location>
    <ligand>
        <name>Zn(2+)</name>
        <dbReference type="ChEBI" id="CHEBI:29105"/>
        <label>B</label>
    </ligand>
</feature>
<feature type="glycosylation site" description="N-linked (GlcNAc...) asparagine" evidence="2">
    <location>
        <position position="96"/>
    </location>
</feature>
<feature type="glycosylation site" description="N-linked (GlcNAc...) asparagine" evidence="2">
    <location>
        <position position="104"/>
    </location>
</feature>
<feature type="glycosylation site" description="N-linked (GlcNAc...) asparagine" evidence="2">
    <location>
        <position position="181"/>
    </location>
</feature>
<feature type="glycosylation site" description="N-linked (GlcNAc...) asparagine" evidence="2">
    <location>
        <position position="304"/>
    </location>
</feature>
<feature type="glycosylation site" description="N-linked (GlcNAc...) asparagine" evidence="2">
    <location>
        <position position="350"/>
    </location>
</feature>
<feature type="glycosylation site" description="N-linked (GlcNAc...) asparagine" evidence="2">
    <location>
        <position position="385"/>
    </location>
</feature>
<feature type="disulfide bond" evidence="1">
    <location>
        <begin position="30"/>
        <end position="41"/>
    </location>
</feature>
<feature type="disulfide bond" evidence="1">
    <location>
        <begin position="42"/>
        <end position="65"/>
    </location>
</feature>
<feature type="disulfide bond" evidence="1">
    <location>
        <begin position="56"/>
        <end position="99"/>
    </location>
</feature>
<feature type="disulfide bond" evidence="1">
    <location>
        <begin position="101"/>
        <end position="110"/>
    </location>
</feature>
<feature type="disulfide bond" evidence="1">
    <location>
        <begin position="113"/>
        <end position="122"/>
    </location>
</feature>
<feature type="disulfide bond" evidence="1">
    <location>
        <begin position="258"/>
        <end position="261"/>
    </location>
</feature>
<feature type="disulfide bond" evidence="1">
    <location>
        <begin position="290"/>
        <end position="303"/>
    </location>
</feature>
<feature type="sequence variant" description="In brown." evidence="6">
    <original>C</original>
    <variation>Y</variation>
    <location>
        <position position="110"/>
    </location>
</feature>
<feature type="sequence variant" description="In brown." evidence="6">
    <original>R</original>
    <variation>H</variation>
    <location>
        <position position="326"/>
    </location>
</feature>
<evidence type="ECO:0000250" key="1">
    <source>
        <dbReference type="UniProtKB" id="P17643"/>
    </source>
</evidence>
<evidence type="ECO:0000255" key="2"/>
<evidence type="ECO:0000269" key="3">
    <source>
    </source>
</evidence>
<evidence type="ECO:0000269" key="4">
    <source>
    </source>
</evidence>
<evidence type="ECO:0000269" key="5">
    <source>
    </source>
</evidence>
<evidence type="ECO:0000269" key="6">
    <source>
    </source>
</evidence>
<evidence type="ECO:0000269" key="7">
    <source>
    </source>
</evidence>
<evidence type="ECO:0000269" key="8">
    <source>
    </source>
</evidence>
<evidence type="ECO:0000269" key="9">
    <source>
    </source>
</evidence>
<evidence type="ECO:0000303" key="10">
    <source>
    </source>
</evidence>
<evidence type="ECO:0000305" key="11"/>
<evidence type="ECO:0000305" key="12">
    <source>
    </source>
</evidence>
<keyword id="KW-0002">3D-structure</keyword>
<keyword id="KW-0015">Albinism</keyword>
<keyword id="KW-0186">Copper</keyword>
<keyword id="KW-0225">Disease variant</keyword>
<keyword id="KW-1015">Disulfide bond</keyword>
<keyword id="KW-0325">Glycoprotein</keyword>
<keyword id="KW-0470">Melanin biosynthesis</keyword>
<keyword id="KW-0472">Membrane</keyword>
<keyword id="KW-0479">Metal-binding</keyword>
<keyword id="KW-0503">Monooxygenase</keyword>
<keyword id="KW-0560">Oxidoreductase</keyword>
<keyword id="KW-1185">Reference proteome</keyword>
<keyword id="KW-0732">Signal</keyword>
<keyword id="KW-0812">Transmembrane</keyword>
<keyword id="KW-1133">Transmembrane helix</keyword>
<keyword id="KW-0862">Zinc</keyword>
<accession>P07147</accession>
<organism>
    <name type="scientific">Mus musculus</name>
    <name type="common">Mouse</name>
    <dbReference type="NCBI Taxonomy" id="10090"/>
    <lineage>
        <taxon>Eukaryota</taxon>
        <taxon>Metazoa</taxon>
        <taxon>Chordata</taxon>
        <taxon>Craniata</taxon>
        <taxon>Vertebrata</taxon>
        <taxon>Euteleostomi</taxon>
        <taxon>Mammalia</taxon>
        <taxon>Eutheria</taxon>
        <taxon>Euarchontoglires</taxon>
        <taxon>Glires</taxon>
        <taxon>Rodentia</taxon>
        <taxon>Myomorpha</taxon>
        <taxon>Muroidea</taxon>
        <taxon>Muridae</taxon>
        <taxon>Murinae</taxon>
        <taxon>Mus</taxon>
        <taxon>Mus</taxon>
    </lineage>
</organism>
<sequence>MKSYNVLPLAYISLFLMLFYQVWAQFPRECANIEALRRGVCCPDLLPSSGPGTDPCGSSSGRGRCVAVIADSRPHSRHYPHDGKDDREAWPLRFFNRTCQCNDNFSGHNCGTCRPGWRGAACNQKILTVRRNLLDLSPEEKSHFVRALDMAKRTTHPQFVIATRRLEDILGPDGNTPQFENISVYNYFVWTHYYSVKKTFLGTGQESFGDVDFSHEGPAFLTWHRYHLLQLERDMQEMLQEPSFSLPYWNFATGKNVCDVCTDDLMGSRSNFDSTLISPNSVFSQWRVVCESLEEYDTLGTLCNSTEGGPIRRNPAGNVGRPAVQRLPEPQDVTQCLEVRVFDTPPFYSNSTDSFRNTVEGYSAPTGKYDPAVRSLHNLAHLFLNGTGGQTHLSPNDPIFVLLHTFTDAVFDEWLRRYNADISTFPLENAPIGHNRQYNMVPFWPPVTNTEMFVTAPDNLGYAYEVQWPGQEFTVSEIITIAVVAALLLVAAIFGVASCLIRSRSTKNEANQPLLTDHYQRYAEDYEELPNPNHSMV</sequence>
<comment type="function">
    <text evidence="3 6 9">Plays a role in melanin biosynthesis (PubMed:2245916). Catalyzes the oxidation of 5,6-dihydroxyindole-2-carboxylic acid (DHICA) into indole-5,6-quinone-2-carboxylic acid (PubMed:7813420). May regulate or influence the type of melanin synthesized (PubMed:2245916, PubMed:7813420). Also to a lower extent, capable of hydroxylating tyrosine and producing melanin (PubMed:1537333).</text>
</comment>
<comment type="catalytic activity">
    <reaction evidence="9">
        <text>2 5,6-dihydroxyindole-2-carboxylate + O2 = 2 indole-5,6-quinone-2-carboxylate + 2 H2O</text>
        <dbReference type="Rhea" id="RHEA:68388"/>
        <dbReference type="ChEBI" id="CHEBI:15377"/>
        <dbReference type="ChEBI" id="CHEBI:15379"/>
        <dbReference type="ChEBI" id="CHEBI:16875"/>
        <dbReference type="ChEBI" id="CHEBI:177869"/>
    </reaction>
    <physiologicalReaction direction="left-to-right" evidence="12">
        <dbReference type="Rhea" id="RHEA:68389"/>
    </physiologicalReaction>
</comment>
<comment type="cofactor">
    <cofactor evidence="1">
        <name>Cu(2+)</name>
        <dbReference type="ChEBI" id="CHEBI:29036"/>
    </cofactor>
    <cofactor evidence="1">
        <name>Zn(2+)</name>
        <dbReference type="ChEBI" id="CHEBI:29105"/>
    </cofactor>
    <text evidence="1">Contains bound zinc ions after heterologous expression in insect cells.</text>
</comment>
<comment type="pathway">
    <text evidence="6">Pigment biosynthesis; melanin biosynthesis.</text>
</comment>
<comment type="subunit">
    <text evidence="1 5 8">Monomer (By similarity). Interacts with ATP7A (PubMed:18650808). Interacts with SLC45A2 (PubMed:35469906).</text>
</comment>
<comment type="interaction">
    <interactant intactId="EBI-821614">
        <id>P07147</id>
    </interactant>
    <interactant intactId="EBI-821603">
        <id>P11344</id>
        <label>Tyr</label>
    </interactant>
    <organismsDiffer>false</organismsDiffer>
    <experiments>8</experiments>
</comment>
<comment type="subcellular location">
    <subcellularLocation>
        <location evidence="4 5 7">Melanosome membrane</location>
        <topology evidence="4">Single-pass type I membrane protein</topology>
    </subcellularLocation>
    <text evidence="4 7">Located to mature stage III and IV melanosomes and apposed endosomal tubular membranes. Transported to pigmented melanosomes by the BLOC-1 complex. Proper trafficking to melanosome is regulated by SGSM2, ANKRD27, RAB9A, RAB32 and RAB38.</text>
</comment>
<comment type="tissue specificity">
    <text>Pigment cells.</text>
</comment>
<comment type="PTM">
    <text evidence="3">Glycosylated.</text>
</comment>
<comment type="disease">
    <text evidence="6">Defects in Tyrp1 are the cause of the brown (b) phenotype. Brown mice have a brown or hypopigmented coat.</text>
</comment>
<comment type="similarity">
    <text evidence="11">Belongs to the tyrosinase family.</text>
</comment>
<comment type="caution">
    <text evidence="1 9 11">The precise function of this protein in melanin biosynthesis is still under debate. DHICA oxidase activity is controversial. The mouse protein has been shown to have DHICA oxidase activity (PubMed:7813420). In contrast, the human protein was shown lack DHICA oxidase activity, or to have DHICA oxidase activity only in the presence of Cu(2+), but not with Zn(2+) (By similarity).</text>
</comment>
<dbReference type="EC" id="1.14.18.-" evidence="9"/>
<dbReference type="EMBL" id="X03687">
    <property type="protein sequence ID" value="CAA27323.1"/>
    <property type="molecule type" value="mRNA"/>
</dbReference>
<dbReference type="EMBL" id="BC076598">
    <property type="protein sequence ID" value="AAH76598.1"/>
    <property type="molecule type" value="mRNA"/>
</dbReference>
<dbReference type="CCDS" id="CCDS18290.1"/>
<dbReference type="PIR" id="A24933">
    <property type="entry name" value="YRMSB6"/>
</dbReference>
<dbReference type="RefSeq" id="NP_001268943.1">
    <property type="nucleotide sequence ID" value="NM_001282014.1"/>
</dbReference>
<dbReference type="RefSeq" id="NP_001268944.1">
    <property type="nucleotide sequence ID" value="NM_001282015.1"/>
</dbReference>
<dbReference type="RefSeq" id="NP_112479.1">
    <property type="nucleotide sequence ID" value="NM_031202.3"/>
</dbReference>
<dbReference type="PDB" id="6MP0">
    <property type="method" value="X-ray"/>
    <property type="resolution" value="2.00 A"/>
    <property type="chains" value="A=455-463"/>
</dbReference>
<dbReference type="PDB" id="6MP1">
    <property type="method" value="X-ray"/>
    <property type="resolution" value="2.21 A"/>
    <property type="chains" value="A=455-463"/>
</dbReference>
<dbReference type="PDBsum" id="6MP0"/>
<dbReference type="PDBsum" id="6MP1"/>
<dbReference type="SMR" id="P07147"/>
<dbReference type="CORUM" id="P07147"/>
<dbReference type="FunCoup" id="P07147">
    <property type="interactions" value="66"/>
</dbReference>
<dbReference type="IntAct" id="P07147">
    <property type="interactions" value="1"/>
</dbReference>
<dbReference type="STRING" id="10090.ENSMUSP00000006151"/>
<dbReference type="BindingDB" id="P07147"/>
<dbReference type="ChEMBL" id="CHEMBL3638355"/>
<dbReference type="GlyCosmos" id="P07147">
    <property type="glycosylation" value="6 sites, No reported glycans"/>
</dbReference>
<dbReference type="GlyGen" id="P07147">
    <property type="glycosylation" value="6 sites"/>
</dbReference>
<dbReference type="iPTMnet" id="P07147"/>
<dbReference type="PhosphoSitePlus" id="P07147"/>
<dbReference type="PaxDb" id="10090-ENSMUSP00000006151"/>
<dbReference type="ProteomicsDB" id="297764"/>
<dbReference type="Antibodypedia" id="745">
    <property type="antibodies" value="819 antibodies from 33 providers"/>
</dbReference>
<dbReference type="DNASU" id="22178"/>
<dbReference type="Ensembl" id="ENSMUST00000006151.13">
    <property type="protein sequence ID" value="ENSMUSP00000006151.7"/>
    <property type="gene ID" value="ENSMUSG00000005994.15"/>
</dbReference>
<dbReference type="Ensembl" id="ENSMUST00000102831.8">
    <property type="protein sequence ID" value="ENSMUSP00000099895.2"/>
    <property type="gene ID" value="ENSMUSG00000005994.15"/>
</dbReference>
<dbReference type="GeneID" id="22178"/>
<dbReference type="KEGG" id="mmu:22178"/>
<dbReference type="UCSC" id="uc008tjq.3">
    <property type="organism name" value="mouse"/>
</dbReference>
<dbReference type="AGR" id="MGI:98881"/>
<dbReference type="CTD" id="7306"/>
<dbReference type="MGI" id="MGI:98881">
    <property type="gene designation" value="Tyrp1"/>
</dbReference>
<dbReference type="VEuPathDB" id="HostDB:ENSMUSG00000005994"/>
<dbReference type="eggNOG" id="ENOG502QRNA">
    <property type="taxonomic scope" value="Eukaryota"/>
</dbReference>
<dbReference type="GeneTree" id="ENSGT00940000155804"/>
<dbReference type="HOGENOM" id="CLU_038693_1_0_1"/>
<dbReference type="InParanoid" id="P07147"/>
<dbReference type="OMA" id="RSYKMEG"/>
<dbReference type="OrthoDB" id="6132182at2759"/>
<dbReference type="PhylomeDB" id="P07147"/>
<dbReference type="TreeFam" id="TF315865"/>
<dbReference type="BioCyc" id="MetaCyc:MONOMER-15620"/>
<dbReference type="Reactome" id="R-MMU-5662702">
    <property type="pathway name" value="Melanin biosynthesis"/>
</dbReference>
<dbReference type="UniPathway" id="UPA00785"/>
<dbReference type="BioGRID-ORCS" id="22178">
    <property type="hits" value="2 hits in 78 CRISPR screens"/>
</dbReference>
<dbReference type="ChiTaRS" id="Tyrp1">
    <property type="organism name" value="mouse"/>
</dbReference>
<dbReference type="PRO" id="PR:P07147"/>
<dbReference type="Proteomes" id="UP000000589">
    <property type="component" value="Chromosome 4"/>
</dbReference>
<dbReference type="RNAct" id="P07147">
    <property type="molecule type" value="protein"/>
</dbReference>
<dbReference type="Bgee" id="ENSMUSG00000005994">
    <property type="expression patterns" value="Expressed in iris and 62 other cell types or tissues"/>
</dbReference>
<dbReference type="ExpressionAtlas" id="P07147">
    <property type="expression patterns" value="baseline and differential"/>
</dbReference>
<dbReference type="GO" id="GO:0030669">
    <property type="term" value="C:clathrin-coated endocytic vesicle membrane"/>
    <property type="evidence" value="ECO:0007669"/>
    <property type="project" value="Ensembl"/>
</dbReference>
<dbReference type="GO" id="GO:0010008">
    <property type="term" value="C:endosome membrane"/>
    <property type="evidence" value="ECO:0007669"/>
    <property type="project" value="Ensembl"/>
</dbReference>
<dbReference type="GO" id="GO:0042470">
    <property type="term" value="C:melanosome"/>
    <property type="evidence" value="ECO:0000314"/>
    <property type="project" value="UniProtKB"/>
</dbReference>
<dbReference type="GO" id="GO:0033162">
    <property type="term" value="C:melanosome membrane"/>
    <property type="evidence" value="ECO:0000314"/>
    <property type="project" value="UniProtKB"/>
</dbReference>
<dbReference type="GO" id="GO:0042802">
    <property type="term" value="F:identical protein binding"/>
    <property type="evidence" value="ECO:0000353"/>
    <property type="project" value="MGI"/>
</dbReference>
<dbReference type="GO" id="GO:0046872">
    <property type="term" value="F:metal ion binding"/>
    <property type="evidence" value="ECO:0007669"/>
    <property type="project" value="UniProtKB-KW"/>
</dbReference>
<dbReference type="GO" id="GO:0042803">
    <property type="term" value="F:protein homodimerization activity"/>
    <property type="evidence" value="ECO:0000314"/>
    <property type="project" value="UniProtKB"/>
</dbReference>
<dbReference type="GO" id="GO:0004503">
    <property type="term" value="F:tyrosinase activity"/>
    <property type="evidence" value="ECO:0000250"/>
    <property type="project" value="UniProtKB"/>
</dbReference>
<dbReference type="GO" id="GO:0043438">
    <property type="term" value="P:acetoacetic acid metabolic process"/>
    <property type="evidence" value="ECO:0000315"/>
    <property type="project" value="MGI"/>
</dbReference>
<dbReference type="GO" id="GO:0006583">
    <property type="term" value="P:melanin biosynthetic process from tyrosine"/>
    <property type="evidence" value="ECO:0000304"/>
    <property type="project" value="UniProtKB"/>
</dbReference>
<dbReference type="GO" id="GO:0006582">
    <property type="term" value="P:melanin metabolic process"/>
    <property type="evidence" value="ECO:0000315"/>
    <property type="project" value="MGI"/>
</dbReference>
<dbReference type="GO" id="GO:0030318">
    <property type="term" value="P:melanocyte differentiation"/>
    <property type="evidence" value="ECO:0000315"/>
    <property type="project" value="MGI"/>
</dbReference>
<dbReference type="GO" id="GO:0032438">
    <property type="term" value="P:melanosome organization"/>
    <property type="evidence" value="ECO:0000315"/>
    <property type="project" value="MGI"/>
</dbReference>
<dbReference type="GO" id="GO:0043473">
    <property type="term" value="P:pigmentation"/>
    <property type="evidence" value="ECO:0000315"/>
    <property type="project" value="MGI"/>
</dbReference>
<dbReference type="GO" id="GO:0048023">
    <property type="term" value="P:positive regulation of melanin biosynthetic process"/>
    <property type="evidence" value="ECO:0000316"/>
    <property type="project" value="CACAO"/>
</dbReference>
<dbReference type="FunFam" id="1.10.1280.10:FF:000001">
    <property type="entry name" value="5,6-dihydroxyindole-2-carboxylic acid oxidase"/>
    <property type="match status" value="1"/>
</dbReference>
<dbReference type="Gene3D" id="1.10.1280.10">
    <property type="entry name" value="Di-copper center containing domain from catechol oxidase"/>
    <property type="match status" value="1"/>
</dbReference>
<dbReference type="InterPro" id="IPR008922">
    <property type="entry name" value="Di-copper_centre_dom_sf"/>
</dbReference>
<dbReference type="InterPro" id="IPR050316">
    <property type="entry name" value="Tyrosinase/Hemocyanin"/>
</dbReference>
<dbReference type="InterPro" id="IPR002227">
    <property type="entry name" value="Tyrosinase_Cu-bd"/>
</dbReference>
<dbReference type="PANTHER" id="PTHR11474:SF3">
    <property type="entry name" value="5,6-DIHYDROXYINDOLE-2-CARBOXYLIC ACID OXIDASE"/>
    <property type="match status" value="1"/>
</dbReference>
<dbReference type="PANTHER" id="PTHR11474">
    <property type="entry name" value="TYROSINASE FAMILY MEMBER"/>
    <property type="match status" value="1"/>
</dbReference>
<dbReference type="Pfam" id="PF00264">
    <property type="entry name" value="Tyrosinase"/>
    <property type="match status" value="1"/>
</dbReference>
<dbReference type="PRINTS" id="PR00092">
    <property type="entry name" value="TYROSINASE"/>
</dbReference>
<dbReference type="SUPFAM" id="SSF48056">
    <property type="entry name" value="Di-copper centre-containing domain"/>
    <property type="match status" value="1"/>
</dbReference>
<dbReference type="PROSITE" id="PS00497">
    <property type="entry name" value="TYROSINASE_1"/>
    <property type="match status" value="1"/>
</dbReference>
<dbReference type="PROSITE" id="PS00498">
    <property type="entry name" value="TYROSINASE_2"/>
    <property type="match status" value="1"/>
</dbReference>
<gene>
    <name type="primary">Tyrp1</name>
    <name type="synonym">Tyrp-1</name>
</gene>
<reference key="1">
    <citation type="journal article" date="1986" name="Nucleic Acids Res.">
        <title>Cloning and expression of cDNA encoding mouse tyrosinase.</title>
        <authorList>
            <person name="Shibahara S."/>
            <person name="Tomita Y."/>
            <person name="Sakakura T."/>
            <person name="Nager C."/>
            <person name="Chaudhuri B."/>
            <person name="Mueller R."/>
        </authorList>
    </citation>
    <scope>NUCLEOTIDE SEQUENCE [MRNA]</scope>
    <source>
        <tissue>Melanoma</tissue>
    </source>
</reference>
<reference key="2">
    <citation type="journal article" date="2004" name="Genome Res.">
        <title>The status, quality, and expansion of the NIH full-length cDNA project: the Mammalian Gene Collection (MGC).</title>
        <authorList>
            <consortium name="The MGC Project Team"/>
        </authorList>
    </citation>
    <scope>NUCLEOTIDE SEQUENCE [LARGE SCALE MRNA]</scope>
    <source>
        <strain>C57BL/6J</strain>
        <tissue>Eye</tissue>
    </source>
</reference>
<reference key="3">
    <citation type="journal article" date="1988" name="Proc. Natl. Acad. Sci. U.S.A.">
        <title>A cDNA encoding tyrosinase-related protein maps to the brown locus in mouse.</title>
        <authorList>
            <person name="Jackson I.J."/>
        </authorList>
    </citation>
    <scope>IDENTIFICATION OF PROTEIN</scope>
</reference>
<reference key="4">
    <citation type="journal article" date="1990" name="Proc. Natl. Acad. Sci. U.S.A.">
        <title>Murine and human b locus pigmentation genes encode a glycoprotein (gp75) with catalase activity.</title>
        <authorList>
            <person name="Halaban R."/>
            <person name="Moellmann G."/>
        </authorList>
    </citation>
    <scope>POSSIBLE FUNCTION</scope>
</reference>
<reference key="5">
    <citation type="journal article" date="1992" name="EMBO J.">
        <title>A second tyrosinase-related protein, TRP-2, is a melanogenic enzyme termed DOPAchrome tautomerase.</title>
        <authorList>
            <person name="Tsukamoto K."/>
            <person name="Jackson I.J."/>
            <person name="Urabe K."/>
            <person name="Montague P.M."/>
            <person name="Hearing V.J."/>
        </authorList>
    </citation>
    <scope>FUNCTION</scope>
    <scope>GLYCOSYLATION</scope>
</reference>
<reference key="6">
    <citation type="journal article" date="1993" name="J. Cell Sci.">
        <title>The mouse brown (b) locus protein has dopachrome tautomerase activity and is located in lysosomes in transfected fibroblasts.</title>
        <authorList>
            <person name="Winder A.J."/>
            <person name="Wittbjer A."/>
            <person name="Rosengren E."/>
            <person name="Rorsman H."/>
        </authorList>
    </citation>
    <scope>POSSIBLE FUNCTION</scope>
</reference>
<reference key="7">
    <citation type="journal article" date="1994" name="EMBO J.">
        <title>Tyrosinase related protein 1 (TRP1) functions as a DHICA oxidase in melanin biosynthesis.</title>
        <authorList>
            <person name="Kobayashi T."/>
            <person name="Urabe K."/>
            <person name="Winder A."/>
            <person name="Jimenez-Cervantes C."/>
            <person name="Imokawa G."/>
            <person name="Brewington T."/>
            <person name="Solano F."/>
            <person name="Garcia-Borron J.C."/>
            <person name="Hearing V.J."/>
        </authorList>
    </citation>
    <scope>FUNCTION</scope>
    <scope>CATALYTIC ACTIVITY</scope>
</reference>
<reference key="8">
    <citation type="journal article" date="2007" name="Mol. Biol. Cell">
        <title>BLOC-1 is required for cargo-specific sorting from vacuolar early endosomes toward lysosome-related organelles.</title>
        <authorList>
            <person name="Setty S.R."/>
            <person name="Tenza D."/>
            <person name="Truschel S.T."/>
            <person name="Chou E."/>
            <person name="Sviderskaya E.V."/>
            <person name="Theos A.C."/>
            <person name="Lamoreux M.L."/>
            <person name="Di Pietro S.M."/>
            <person name="Starcevic M."/>
            <person name="Bennett D.C."/>
            <person name="Dell'Angelica E.C."/>
            <person name="Raposo G."/>
            <person name="Marks M.S."/>
        </authorList>
    </citation>
    <scope>SUBCELLULAR LOCATION</scope>
</reference>
<reference key="9">
    <citation type="journal article" date="2008" name="Nature">
        <title>Cell-specific ATP7A transport sustains copper-dependent tyrosinase activity in melanosomes.</title>
        <authorList>
            <person name="Setty S.R."/>
            <person name="Tenza D."/>
            <person name="Sviderskaya E.V."/>
            <person name="Bennett D.C."/>
            <person name="Raposo G."/>
            <person name="Marks M.S."/>
        </authorList>
    </citation>
    <scope>SUBCELLULAR LOCATION</scope>
    <scope>INTERACTION WITH ATP7A</scope>
</reference>
<reference key="10">
    <citation type="journal article" date="2016" name="J. Biol. Chem.">
        <title>RUTBC1 functions as a GTPase-activating protein for Rab32/38 and regulates melanogenic enzyme trafficking in melanocytes.</title>
        <authorList>
            <person name="Marubashi S."/>
            <person name="Shimada H."/>
            <person name="Fukuda M."/>
            <person name="Ohbayashi N."/>
        </authorList>
    </citation>
    <scope>SUBCELLULAR LOCATION</scope>
</reference>
<reference key="11">
    <citation type="journal article" date="2022" name="J. Invest. Dermatol.">
        <title>Ablation of H+/glucose Exporter SLC45A2 Enhances Melanosomal Glycolysis to Inhibit Melanin Biosynthesis and Promote Melanoma Metastasis.</title>
        <authorList>
            <person name="Liu Y."/>
            <person name="Chi W."/>
            <person name="Tao L."/>
            <person name="Wang G."/>
            <person name="Deepak R.N.V.K."/>
            <person name="Sheng L."/>
            <person name="Chen T."/>
            <person name="Feng Y."/>
            <person name="Cao X."/>
            <person name="Cheng L."/>
            <person name="Zhao X."/>
            <person name="Liu X."/>
            <person name="Deng H."/>
            <person name="Fan H."/>
            <person name="Jiang P."/>
            <person name="Chen L."/>
        </authorList>
    </citation>
    <scope>INTERACTION WITH SLC45A2</scope>
</reference>
<reference key="12">
    <citation type="journal article" date="1990" name="Genetics">
        <title>The molecular basis of brown, an old mouse mutation, and of an induced revertant to wild type.</title>
        <authorList>
            <person name="Zdarsky E."/>
            <person name="Favor J."/>
            <person name="Jackson I.J."/>
        </authorList>
    </citation>
    <scope>VARIANTS BROWN TYR-110 AND HIS-326</scope>
    <scope>FUNCTION</scope>
    <scope>PATHWAY</scope>
</reference>
<protein>
    <recommendedName>
        <fullName>5,6-dihydroxyindole-2-carboxylic acid oxidase</fullName>
        <shortName evidence="10">DHICA oxidase</shortName>
        <ecNumber evidence="9">1.14.18.-</ecNumber>
    </recommendedName>
    <alternativeName>
        <fullName>Brown locus protein</fullName>
    </alternativeName>
    <alternativeName>
        <fullName>Catalase B</fullName>
    </alternativeName>
    <alternativeName>
        <fullName>Tyrosinase-related protein 1</fullName>
        <shortName>TRP</shortName>
        <shortName>TRP-1</shortName>
        <shortName>TRP1</shortName>
    </alternativeName>
</protein>
<name>TYRP1_MOUSE</name>
<proteinExistence type="evidence at protein level"/>